<gene>
    <name evidence="1" type="primary">rpmD</name>
    <name type="ordered locus">DvMF_0097</name>
</gene>
<evidence type="ECO:0000255" key="1">
    <source>
        <dbReference type="HAMAP-Rule" id="MF_01371"/>
    </source>
</evidence>
<evidence type="ECO:0000305" key="2"/>
<proteinExistence type="inferred from homology"/>
<dbReference type="EMBL" id="CP001197">
    <property type="protein sequence ID" value="ACL07058.1"/>
    <property type="molecule type" value="Genomic_DNA"/>
</dbReference>
<dbReference type="SMR" id="B8DNK1"/>
<dbReference type="STRING" id="883.DvMF_0097"/>
<dbReference type="KEGG" id="dvm:DvMF_0097"/>
<dbReference type="eggNOG" id="COG1841">
    <property type="taxonomic scope" value="Bacteria"/>
</dbReference>
<dbReference type="HOGENOM" id="CLU_131047_1_3_7"/>
<dbReference type="OrthoDB" id="9812790at2"/>
<dbReference type="GO" id="GO:0015934">
    <property type="term" value="C:large ribosomal subunit"/>
    <property type="evidence" value="ECO:0007669"/>
    <property type="project" value="InterPro"/>
</dbReference>
<dbReference type="GO" id="GO:0003735">
    <property type="term" value="F:structural constituent of ribosome"/>
    <property type="evidence" value="ECO:0007669"/>
    <property type="project" value="InterPro"/>
</dbReference>
<dbReference type="GO" id="GO:0006412">
    <property type="term" value="P:translation"/>
    <property type="evidence" value="ECO:0007669"/>
    <property type="project" value="InterPro"/>
</dbReference>
<dbReference type="CDD" id="cd01658">
    <property type="entry name" value="Ribosomal_L30"/>
    <property type="match status" value="1"/>
</dbReference>
<dbReference type="Gene3D" id="3.30.1390.20">
    <property type="entry name" value="Ribosomal protein L30, ferredoxin-like fold domain"/>
    <property type="match status" value="1"/>
</dbReference>
<dbReference type="HAMAP" id="MF_01371_B">
    <property type="entry name" value="Ribosomal_uL30_B"/>
    <property type="match status" value="1"/>
</dbReference>
<dbReference type="InterPro" id="IPR036919">
    <property type="entry name" value="Ribo_uL30_ferredoxin-like_sf"/>
</dbReference>
<dbReference type="InterPro" id="IPR005996">
    <property type="entry name" value="Ribosomal_uL30_bac-type"/>
</dbReference>
<dbReference type="InterPro" id="IPR016082">
    <property type="entry name" value="Ribosomal_uL30_ferredoxin-like"/>
</dbReference>
<dbReference type="NCBIfam" id="TIGR01308">
    <property type="entry name" value="rpmD_bact"/>
    <property type="match status" value="1"/>
</dbReference>
<dbReference type="Pfam" id="PF00327">
    <property type="entry name" value="Ribosomal_L30"/>
    <property type="match status" value="1"/>
</dbReference>
<dbReference type="PIRSF" id="PIRSF002211">
    <property type="entry name" value="Ribosomal_L30_bac-type"/>
    <property type="match status" value="1"/>
</dbReference>
<dbReference type="SUPFAM" id="SSF55129">
    <property type="entry name" value="Ribosomal protein L30p/L7e"/>
    <property type="match status" value="1"/>
</dbReference>
<reference key="1">
    <citation type="submission" date="2008-10" db="EMBL/GenBank/DDBJ databases">
        <title>Complete sequence of Desulfovibrio vulgaris str. 'Miyazaki F'.</title>
        <authorList>
            <person name="Lucas S."/>
            <person name="Copeland A."/>
            <person name="Lapidus A."/>
            <person name="Glavina del Rio T."/>
            <person name="Dalin E."/>
            <person name="Tice H."/>
            <person name="Bruce D."/>
            <person name="Goodwin L."/>
            <person name="Pitluck S."/>
            <person name="Sims D."/>
            <person name="Brettin T."/>
            <person name="Detter J.C."/>
            <person name="Han C."/>
            <person name="Larimer F."/>
            <person name="Land M."/>
            <person name="Hauser L."/>
            <person name="Kyrpides N."/>
            <person name="Mikhailova N."/>
            <person name="Hazen T.C."/>
            <person name="Richardson P."/>
        </authorList>
    </citation>
    <scope>NUCLEOTIDE SEQUENCE [LARGE SCALE GENOMIC DNA]</scope>
    <source>
        <strain>DSM 19637 / Miyazaki F</strain>
    </source>
</reference>
<keyword id="KW-0687">Ribonucleoprotein</keyword>
<keyword id="KW-0689">Ribosomal protein</keyword>
<accession>B8DNK1</accession>
<protein>
    <recommendedName>
        <fullName evidence="1">Large ribosomal subunit protein uL30</fullName>
    </recommendedName>
    <alternativeName>
        <fullName evidence="2">50S ribosomal protein L30</fullName>
    </alternativeName>
</protein>
<feature type="chain" id="PRO_1000144674" description="Large ribosomal subunit protein uL30">
    <location>
        <begin position="1"/>
        <end position="56"/>
    </location>
</feature>
<name>RL30_NITV9</name>
<organism>
    <name type="scientific">Nitratidesulfovibrio vulgaris (strain DSM 19637 / Miyazaki F)</name>
    <name type="common">Desulfovibrio vulgaris</name>
    <dbReference type="NCBI Taxonomy" id="883"/>
    <lineage>
        <taxon>Bacteria</taxon>
        <taxon>Pseudomonadati</taxon>
        <taxon>Thermodesulfobacteriota</taxon>
        <taxon>Desulfovibrionia</taxon>
        <taxon>Desulfovibrionales</taxon>
        <taxon>Desulfovibrionaceae</taxon>
        <taxon>Nitratidesulfovibrio</taxon>
    </lineage>
</organism>
<comment type="subunit">
    <text evidence="1">Part of the 50S ribosomal subunit.</text>
</comment>
<comment type="similarity">
    <text evidence="1">Belongs to the universal ribosomal protein uL30 family.</text>
</comment>
<sequence length="56" mass="6422">MIKVKLVRSWIGCKPKQRKVLDALGLRKIRCEKSFEDNAAIRGMIAEVKHLVEVSE</sequence>